<proteinExistence type="inferred from homology"/>
<name>T2X1_XANCC</name>
<organism>
    <name type="scientific">Xanthomonas campestris pv. cyanopsidis</name>
    <dbReference type="NCBI Taxonomy" id="29444"/>
    <lineage>
        <taxon>Bacteria</taxon>
        <taxon>Pseudomonadati</taxon>
        <taxon>Pseudomonadota</taxon>
        <taxon>Gammaproteobacteria</taxon>
        <taxon>Lysobacterales</taxon>
        <taxon>Lysobacteraceae</taxon>
        <taxon>Xanthomonas</taxon>
    </lineage>
</organism>
<feature type="chain" id="PRO_0000077371" description="Type II restriction enzyme XcyI">
    <location>
        <begin position="1"/>
        <end position="333"/>
    </location>
</feature>
<dbReference type="EC" id="3.1.21.4" evidence="3"/>
<dbReference type="EMBL" id="M98768">
    <property type="protein sequence ID" value="AAA27609.1"/>
    <property type="molecule type" value="Genomic_DNA"/>
</dbReference>
<dbReference type="PIR" id="S35550">
    <property type="entry name" value="S35550"/>
</dbReference>
<dbReference type="REBASE" id="2130">
    <property type="entry name" value="XcyI"/>
</dbReference>
<dbReference type="PRO" id="PR:P30773"/>
<dbReference type="GO" id="GO:0003677">
    <property type="term" value="F:DNA binding"/>
    <property type="evidence" value="ECO:0007669"/>
    <property type="project" value="InterPro"/>
</dbReference>
<dbReference type="GO" id="GO:0000287">
    <property type="term" value="F:magnesium ion binding"/>
    <property type="evidence" value="ECO:0007669"/>
    <property type="project" value="InterPro"/>
</dbReference>
<dbReference type="GO" id="GO:0009036">
    <property type="term" value="F:type II site-specific deoxyribonuclease activity"/>
    <property type="evidence" value="ECO:0007669"/>
    <property type="project" value="UniProtKB-EC"/>
</dbReference>
<dbReference type="GO" id="GO:0009307">
    <property type="term" value="P:DNA restriction-modification system"/>
    <property type="evidence" value="ECO:0007669"/>
    <property type="project" value="UniProtKB-KW"/>
</dbReference>
<dbReference type="InterPro" id="IPR019071">
    <property type="entry name" value="Restrct_endonuc_II_XcyI"/>
</dbReference>
<dbReference type="Pfam" id="PF09571">
    <property type="entry name" value="RE_XcyI"/>
    <property type="match status" value="1"/>
</dbReference>
<evidence type="ECO:0000303" key="1">
    <source>
    </source>
</evidence>
<evidence type="ECO:0000305" key="2"/>
<evidence type="ECO:0000305" key="3">
    <source>
    </source>
</evidence>
<sequence length="333" mass="36686">MTTPNKINFPPPKLQIDFAFALKRFRAVYLQSALLETVRDMDIAELDRQLSKYVPPADLATLAQYGLRAELLFAVPAVLEANPHLLGYYRLLMGYSQKEFYGRDKGFGVGCFKSMEEKGKAGKAAVADLHDLCVAFCATASALLAGVGPLRVSRELLDDLTLLTVGPQLRGGANNQRGADGIVLVFEIIREIVAHAAAEVRESAIEVNSATGRPVLIEFAPDPDIIIREEMENQHYRNVVAIEVKSGTDVSNIHNRIGEAEKSHQKARQLGFTECWTVVNVGRLDMVKARSESPSTDRFYSLTALSLRAGDEYADFRRRVLSLTAIPARPANP</sequence>
<reference key="1">
    <citation type="journal article" date="1992" name="Nucleic Acids Res.">
        <title>Structure and evolution of the XcyI restriction-modification system.</title>
        <authorList>
            <person name="Withers B."/>
            <person name="Ambroso L.A."/>
            <person name="Dunbar J.C."/>
        </authorList>
    </citation>
    <scope>NUCLEOTIDE SEQUENCE [GENOMIC DNA]</scope>
    <source>
        <strain>13D5</strain>
    </source>
</reference>
<reference key="2">
    <citation type="journal article" date="2003" name="Nucleic Acids Res.">
        <title>A nomenclature for restriction enzymes, DNA methyltransferases, homing endonucleases and their genes.</title>
        <authorList>
            <person name="Roberts R.J."/>
            <person name="Belfort M."/>
            <person name="Bestor T."/>
            <person name="Bhagwat A.S."/>
            <person name="Bickle T.A."/>
            <person name="Bitinaite J."/>
            <person name="Blumenthal R.M."/>
            <person name="Degtyarev S.K."/>
            <person name="Dryden D.T."/>
            <person name="Dybvig K."/>
            <person name="Firman K."/>
            <person name="Gromova E.S."/>
            <person name="Gumport R.I."/>
            <person name="Halford S.E."/>
            <person name="Hattman S."/>
            <person name="Heitman J."/>
            <person name="Hornby D.P."/>
            <person name="Janulaitis A."/>
            <person name="Jeltsch A."/>
            <person name="Josephsen J."/>
            <person name="Kiss A."/>
            <person name="Klaenhammer T.R."/>
            <person name="Kobayashi I."/>
            <person name="Kong H."/>
            <person name="Krueger D.H."/>
            <person name="Lacks S."/>
            <person name="Marinus M.G."/>
            <person name="Miyahara M."/>
            <person name="Morgan R.D."/>
            <person name="Murray N.E."/>
            <person name="Nagaraja V."/>
            <person name="Piekarowicz A."/>
            <person name="Pingoud A."/>
            <person name="Raleigh E."/>
            <person name="Rao D.N."/>
            <person name="Reich N."/>
            <person name="Repin V.E."/>
            <person name="Selker E.U."/>
            <person name="Shaw P.C."/>
            <person name="Stein D.C."/>
            <person name="Stoddard B.L."/>
            <person name="Szybalski W."/>
            <person name="Trautner T.A."/>
            <person name="Van Etten J.L."/>
            <person name="Vitor J.M."/>
            <person name="Wilson G.G."/>
            <person name="Xu S.Y."/>
        </authorList>
    </citation>
    <scope>NOMENCLATURE</scope>
    <scope>SUBTYPE</scope>
</reference>
<accession>P30773</accession>
<comment type="function">
    <text evidence="1 3">A P subtype restriction enzyme that recognizes the double-stranded sequence 5'-CCCGGG-3' and cleaves after C-1.</text>
</comment>
<comment type="catalytic activity">
    <reaction evidence="3">
        <text>Endonucleolytic cleavage of DNA to give specific double-stranded fragments with terminal 5'-phosphates.</text>
        <dbReference type="EC" id="3.1.21.4"/>
    </reaction>
</comment>
<comment type="cofactor">
    <cofactor>
        <name>Mg(2+)</name>
        <dbReference type="ChEBI" id="CHEBI:18420"/>
    </cofactor>
</comment>
<comment type="subunit">
    <text>Monomer.</text>
</comment>
<comment type="similarity">
    <text evidence="2">Belongs to the XcyI type II restriction endonuclease family.</text>
</comment>
<protein>
    <recommendedName>
        <fullName evidence="1">Type II restriction enzyme XcyI</fullName>
        <shortName>R.XcyI</shortName>
        <ecNumber evidence="3">3.1.21.4</ecNumber>
    </recommendedName>
    <alternativeName>
        <fullName>Endonuclease XcyI</fullName>
    </alternativeName>
    <alternativeName>
        <fullName>Type-2 restriction enzyme XcyI</fullName>
    </alternativeName>
</protein>
<keyword id="KW-0255">Endonuclease</keyword>
<keyword id="KW-0378">Hydrolase</keyword>
<keyword id="KW-0460">Magnesium</keyword>
<keyword id="KW-0540">Nuclease</keyword>
<keyword id="KW-0680">Restriction system</keyword>
<gene>
    <name type="primary">xcyIR</name>
</gene>